<accession>Q9LJD9</accession>
<proteinExistence type="evidence at protein level"/>
<keyword id="KW-1003">Cell membrane</keyword>
<keyword id="KW-0903">Direct protein sequencing</keyword>
<keyword id="KW-0325">Glycoprotein</keyword>
<keyword id="KW-0336">GPI-anchor</keyword>
<keyword id="KW-0379">Hydroxylation</keyword>
<keyword id="KW-0449">Lipoprotein</keyword>
<keyword id="KW-0472">Membrane</keyword>
<keyword id="KW-0654">Proteoglycan</keyword>
<keyword id="KW-0873">Pyrrolidone carboxylic acid</keyword>
<keyword id="KW-1185">Reference proteome</keyword>
<keyword id="KW-0732">Signal</keyword>
<protein>
    <recommendedName>
        <fullName evidence="4">Arabinogalactan protein 12</fullName>
        <shortName evidence="4">AtAGP12</shortName>
    </recommendedName>
    <alternativeName>
        <fullName evidence="4">Arabinogalactan peptide 12</fullName>
        <shortName evidence="4">AG-peptide 12</shortName>
    </alternativeName>
</protein>
<name>AGP12_ARATH</name>
<reference key="1">
    <citation type="journal article" date="2000" name="Plant Cell">
        <title>The classical arabinogalactan protein gene family of Arabidopsis.</title>
        <authorList>
            <person name="Schultz C.J."/>
            <person name="Johnson K.L."/>
            <person name="Currie G."/>
            <person name="Bacic A."/>
        </authorList>
    </citation>
    <scope>NUCLEOTIDE SEQUENCE [MRNA]</scope>
    <scope>PROTEIN SEQUENCE OF 28-38</scope>
    <scope>HYDROXYLATION AT PRO-32; PRO-34 AND PRO-36</scope>
    <scope>PYROGLUTAMATE FORMATION AT GLN-28</scope>
    <source>
        <strain>cv. Columbia</strain>
    </source>
</reference>
<reference key="2">
    <citation type="journal article" date="2000" name="DNA Res.">
        <title>Structural analysis of Arabidopsis thaliana chromosome 3. II. Sequence features of the 4,251,695 bp regions covered by 90 P1, TAC and BAC clones.</title>
        <authorList>
            <person name="Kaneko T."/>
            <person name="Katoh T."/>
            <person name="Sato S."/>
            <person name="Nakamura Y."/>
            <person name="Asamizu E."/>
            <person name="Tabata S."/>
        </authorList>
    </citation>
    <scope>NUCLEOTIDE SEQUENCE [LARGE SCALE GENOMIC DNA]</scope>
    <source>
        <strain>cv. Columbia</strain>
    </source>
</reference>
<reference key="3">
    <citation type="journal article" date="2017" name="Plant J.">
        <title>Araport11: a complete reannotation of the Arabidopsis thaliana reference genome.</title>
        <authorList>
            <person name="Cheng C.Y."/>
            <person name="Krishnakumar V."/>
            <person name="Chan A.P."/>
            <person name="Thibaud-Nissen F."/>
            <person name="Schobel S."/>
            <person name="Town C.D."/>
        </authorList>
    </citation>
    <scope>GENOME REANNOTATION</scope>
    <source>
        <strain>cv. Columbia</strain>
    </source>
</reference>
<reference key="4">
    <citation type="journal article" date="2003" name="Science">
        <title>Empirical analysis of transcriptional activity in the Arabidopsis genome.</title>
        <authorList>
            <person name="Yamada K."/>
            <person name="Lim J."/>
            <person name="Dale J.M."/>
            <person name="Chen H."/>
            <person name="Shinn P."/>
            <person name="Palm C.J."/>
            <person name="Southwick A.M."/>
            <person name="Wu H.C."/>
            <person name="Kim C.J."/>
            <person name="Nguyen M."/>
            <person name="Pham P.K."/>
            <person name="Cheuk R.F."/>
            <person name="Karlin-Newmann G."/>
            <person name="Liu S.X."/>
            <person name="Lam B."/>
            <person name="Sakano H."/>
            <person name="Wu T."/>
            <person name="Yu G."/>
            <person name="Miranda M."/>
            <person name="Quach H.L."/>
            <person name="Tripp M."/>
            <person name="Chang C.H."/>
            <person name="Lee J.M."/>
            <person name="Toriumi M.J."/>
            <person name="Chan M.M."/>
            <person name="Tang C.C."/>
            <person name="Onodera C.S."/>
            <person name="Deng J.M."/>
            <person name="Akiyama K."/>
            <person name="Ansari Y."/>
            <person name="Arakawa T."/>
            <person name="Banh J."/>
            <person name="Banno F."/>
            <person name="Bowser L."/>
            <person name="Brooks S.Y."/>
            <person name="Carninci P."/>
            <person name="Chao Q."/>
            <person name="Choy N."/>
            <person name="Enju A."/>
            <person name="Goldsmith A.D."/>
            <person name="Gurjal M."/>
            <person name="Hansen N.F."/>
            <person name="Hayashizaki Y."/>
            <person name="Johnson-Hopson C."/>
            <person name="Hsuan V.W."/>
            <person name="Iida K."/>
            <person name="Karnes M."/>
            <person name="Khan S."/>
            <person name="Koesema E."/>
            <person name="Ishida J."/>
            <person name="Jiang P.X."/>
            <person name="Jones T."/>
            <person name="Kawai J."/>
            <person name="Kamiya A."/>
            <person name="Meyers C."/>
            <person name="Nakajima M."/>
            <person name="Narusaka M."/>
            <person name="Seki M."/>
            <person name="Sakurai T."/>
            <person name="Satou M."/>
            <person name="Tamse R."/>
            <person name="Vaysberg M."/>
            <person name="Wallender E.K."/>
            <person name="Wong C."/>
            <person name="Yamamura Y."/>
            <person name="Yuan S."/>
            <person name="Shinozaki K."/>
            <person name="Davis R.W."/>
            <person name="Theologis A."/>
            <person name="Ecker J.R."/>
        </authorList>
    </citation>
    <scope>NUCLEOTIDE SEQUENCE [LARGE SCALE MRNA]</scope>
    <source>
        <strain>cv. Columbia</strain>
    </source>
</reference>
<reference key="5">
    <citation type="submission" date="2002-03" db="EMBL/GenBank/DDBJ databases">
        <title>Full-length cDNA from Arabidopsis thaliana.</title>
        <authorList>
            <person name="Brover V.V."/>
            <person name="Troukhan M.E."/>
            <person name="Alexandrov N.A."/>
            <person name="Lu Y.-P."/>
            <person name="Flavell R.B."/>
            <person name="Feldmann K.A."/>
        </authorList>
    </citation>
    <scope>NUCLEOTIDE SEQUENCE [LARGE SCALE MRNA]</scope>
</reference>
<reference key="6">
    <citation type="journal article" date="2004" name="J. Biol. Chem.">
        <title>Post-translational modifications of arabinogalactan-peptides of Arabidopsis thaliana. Endoplasmic reticulum and glycosylphosphatidylinositol-anchor signal cleavage sites and hydroxylation of proline.</title>
        <authorList>
            <person name="Schultz C.J."/>
            <person name="Ferguson K.L."/>
            <person name="Lahnstein J."/>
            <person name="Bacic A."/>
        </authorList>
    </citation>
    <scope>PROTEIN SEQUENCE OF 28-38</scope>
    <scope>HYDROXYLATION AT PRO-32; PRO-34 AND PRO-36</scope>
    <scope>PYROGLUTAMATE FORMATION AT GLN-28</scope>
    <scope>GLYCOSYLATION AT PRO-32; PRO-34 AND PRO-36</scope>
    <scope>GPI-ANCHOR AT SER-38</scope>
</reference>
<reference key="7">
    <citation type="journal article" date="2002" name="Plant Physiol.">
        <title>Using genomic resources to guide research directions. The arabinogalactan protein gene family as a test case.</title>
        <authorList>
            <person name="Schultz C.J."/>
            <person name="Rumsewicz M.P."/>
            <person name="Johnson K.L."/>
            <person name="Jones B.J."/>
            <person name="Gaspar Y.M."/>
            <person name="Bacic A."/>
        </authorList>
    </citation>
    <scope>GENE FAMILY</scope>
    <scope>NOMENCLATURE</scope>
</reference>
<reference key="8">
    <citation type="journal article" date="2014" name="J. Exp. Bot.">
        <title>Differential expression patterns of arabinogalactan proteins in Arabidopsis thaliana reproductive tissues.</title>
        <authorList>
            <person name="Pereira A.M."/>
            <person name="Masiero S."/>
            <person name="Nobre M.S."/>
            <person name="Costa M.L."/>
            <person name="Solis M.T."/>
            <person name="Testillano P.S."/>
            <person name="Sprunck S."/>
            <person name="Coimbra S."/>
        </authorList>
    </citation>
    <scope>TISSUE SPECIFICITY</scope>
</reference>
<comment type="function">
    <text evidence="5">Proteoglycan that seems to be implicated in diverse developmental roles such as differentiation, cell-cell recognition, embryogenesis and programmed cell death.</text>
</comment>
<comment type="subcellular location">
    <subcellularLocation>
        <location evidence="5">Cell membrane</location>
        <topology evidence="2">Lipid-anchor</topology>
        <topology evidence="2">GPI-anchor</topology>
    </subcellularLocation>
</comment>
<comment type="tissue specificity">
    <text evidence="3">Expressed in reproductive tissues. Expressed in chalaza, funiculus, stigma, septum, style and transmitting tract.</text>
</comment>
<comment type="PTM">
    <text evidence="1 2">Contains 4-hydroxyproline; hydroxylated on Pro-32, Pro-34 and Pro-36.</text>
</comment>
<comment type="PTM">
    <text evidence="7">O-glycosylated on hydroxyprolines; noncontiguous hydroxylproline residues are glycosylated with arabinogalactan.</text>
</comment>
<comment type="similarity">
    <text evidence="5">Belongs to the AG-peptide AGP family.</text>
</comment>
<gene>
    <name evidence="4" type="primary">AGP12</name>
    <name type="ordered locus">At3g13520</name>
    <name type="ORF">MRP15.18</name>
</gene>
<organism>
    <name type="scientific">Arabidopsis thaliana</name>
    <name type="common">Mouse-ear cress</name>
    <dbReference type="NCBI Taxonomy" id="3702"/>
    <lineage>
        <taxon>Eukaryota</taxon>
        <taxon>Viridiplantae</taxon>
        <taxon>Streptophyta</taxon>
        <taxon>Embryophyta</taxon>
        <taxon>Tracheophyta</taxon>
        <taxon>Spermatophyta</taxon>
        <taxon>Magnoliopsida</taxon>
        <taxon>eudicotyledons</taxon>
        <taxon>Gunneridae</taxon>
        <taxon>Pentapetalae</taxon>
        <taxon>rosids</taxon>
        <taxon>malvids</taxon>
        <taxon>Brassicales</taxon>
        <taxon>Brassicaceae</taxon>
        <taxon>Camelineae</taxon>
        <taxon>Arabidopsis</taxon>
    </lineage>
</organism>
<feature type="signal peptide" evidence="1 2">
    <location>
        <begin position="1"/>
        <end position="27"/>
    </location>
</feature>
<feature type="peptide" id="PRO_0000269011" description="Arabinogalactan protein 12" evidence="1 2">
    <location>
        <begin position="28"/>
        <end position="38"/>
    </location>
</feature>
<feature type="propeptide" id="PRO_0000269012" description="Removed in mature form" evidence="6 7">
    <location>
        <begin position="39"/>
        <end position="60"/>
    </location>
</feature>
<feature type="modified residue" description="Pyrrolidone carboxylic acid" evidence="1 2">
    <location>
        <position position="28"/>
    </location>
</feature>
<feature type="modified residue" description="4-hydroxyproline" evidence="1 2">
    <location>
        <position position="32"/>
    </location>
</feature>
<feature type="modified residue" description="4-hydroxyproline" evidence="1 2">
    <location>
        <position position="34"/>
    </location>
</feature>
<feature type="modified residue" description="4-hydroxyproline" evidence="1 2">
    <location>
        <position position="36"/>
    </location>
</feature>
<feature type="lipid moiety-binding region" description="GPI-anchor amidated serine" evidence="2">
    <location>
        <position position="38"/>
    </location>
</feature>
<feature type="glycosylation site" description="O-linked (Ara...) hydroxyproline" evidence="7">
    <location>
        <position position="32"/>
    </location>
</feature>
<feature type="glycosylation site" description="O-linked (Ara...) hydroxyproline" evidence="7">
    <location>
        <position position="34"/>
    </location>
</feature>
<feature type="glycosylation site" description="O-linked (Ara...) hydroxyproline" evidence="7">
    <location>
        <position position="36"/>
    </location>
</feature>
<sequence length="60" mass="6089">MESMKMKLIVVLMVAIVAFSAVGNVAAQTEAPAPSPTSDAAMFVPALFASVAALASGFLF</sequence>
<dbReference type="EMBL" id="AF195893">
    <property type="protein sequence ID" value="AAG24280.1"/>
    <property type="molecule type" value="mRNA"/>
</dbReference>
<dbReference type="EMBL" id="AP000603">
    <property type="protein sequence ID" value="BAB01759.1"/>
    <property type="molecule type" value="Genomic_DNA"/>
</dbReference>
<dbReference type="EMBL" id="CP002686">
    <property type="protein sequence ID" value="AEE75367.1"/>
    <property type="molecule type" value="Genomic_DNA"/>
</dbReference>
<dbReference type="EMBL" id="AY059924">
    <property type="protein sequence ID" value="AAL24406.1"/>
    <property type="molecule type" value="mRNA"/>
</dbReference>
<dbReference type="EMBL" id="AY081598">
    <property type="protein sequence ID" value="AAM10160.1"/>
    <property type="molecule type" value="mRNA"/>
</dbReference>
<dbReference type="EMBL" id="AY086039">
    <property type="protein sequence ID" value="AAM63249.1"/>
    <property type="molecule type" value="mRNA"/>
</dbReference>
<dbReference type="RefSeq" id="NP_566458.1">
    <property type="nucleotide sequence ID" value="NM_112198.3"/>
</dbReference>
<dbReference type="BioGRID" id="5888">
    <property type="interactions" value="5"/>
</dbReference>
<dbReference type="IntAct" id="Q9LJD9">
    <property type="interactions" value="5"/>
</dbReference>
<dbReference type="STRING" id="3702.Q9LJD9"/>
<dbReference type="GlyCosmos" id="Q9LJD9">
    <property type="glycosylation" value="3 sites, No reported glycans"/>
</dbReference>
<dbReference type="PaxDb" id="3702-AT3G13520.1"/>
<dbReference type="EnsemblPlants" id="AT3G13520.1">
    <property type="protein sequence ID" value="AT3G13520.1"/>
    <property type="gene ID" value="AT3G13520"/>
</dbReference>
<dbReference type="GeneID" id="820554"/>
<dbReference type="Gramene" id="AT3G13520.1">
    <property type="protein sequence ID" value="AT3G13520.1"/>
    <property type="gene ID" value="AT3G13520"/>
</dbReference>
<dbReference type="KEGG" id="ath:AT3G13520"/>
<dbReference type="Araport" id="AT3G13520"/>
<dbReference type="TAIR" id="AT3G13520">
    <property type="gene designation" value="AGP12"/>
</dbReference>
<dbReference type="HOGENOM" id="CLU_183441_3_0_1"/>
<dbReference type="InParanoid" id="Q9LJD9"/>
<dbReference type="OMA" id="PPPITAC"/>
<dbReference type="OrthoDB" id="997813at2759"/>
<dbReference type="PhylomeDB" id="Q9LJD9"/>
<dbReference type="PRO" id="PR:Q9LJD9"/>
<dbReference type="Proteomes" id="UP000006548">
    <property type="component" value="Chromosome 3"/>
</dbReference>
<dbReference type="ExpressionAtlas" id="Q9LJD9">
    <property type="expression patterns" value="baseline and differential"/>
</dbReference>
<dbReference type="GO" id="GO:0005886">
    <property type="term" value="C:plasma membrane"/>
    <property type="evidence" value="ECO:0007669"/>
    <property type="project" value="UniProtKB-SubCell"/>
</dbReference>
<dbReference type="GO" id="GO:0098552">
    <property type="term" value="C:side of membrane"/>
    <property type="evidence" value="ECO:0007669"/>
    <property type="project" value="UniProtKB-KW"/>
</dbReference>
<dbReference type="InterPro" id="IPR039281">
    <property type="entry name" value="AGP3/12/13/14/21"/>
</dbReference>
<dbReference type="PANTHER" id="PTHR34114">
    <property type="entry name" value="ARABINOGALACTAN PEPTIDE 1"/>
    <property type="match status" value="1"/>
</dbReference>
<dbReference type="PANTHER" id="PTHR34114:SF10">
    <property type="entry name" value="ARABINOGALACTAN PROTEIN 12"/>
    <property type="match status" value="1"/>
</dbReference>
<evidence type="ECO:0000269" key="1">
    <source>
    </source>
</evidence>
<evidence type="ECO:0000269" key="2">
    <source>
    </source>
</evidence>
<evidence type="ECO:0000269" key="3">
    <source>
    </source>
</evidence>
<evidence type="ECO:0000303" key="4">
    <source>
    </source>
</evidence>
<evidence type="ECO:0000305" key="5"/>
<evidence type="ECO:0000305" key="6">
    <source>
    </source>
</evidence>
<evidence type="ECO:0000305" key="7">
    <source>
    </source>
</evidence>